<comment type="function">
    <text evidence="1">Prevents the cell division inhibition by proteins MinC and MinD at internal division sites while permitting inhibition at polar sites. This ensures cell division at the proper site by restricting the formation of a division septum at the midpoint of the long axis of the cell.</text>
</comment>
<comment type="similarity">
    <text evidence="1">Belongs to the MinE family.</text>
</comment>
<sequence length="83" mass="9719">MALLDFFLSRNKNTAHVAKERLQIIVAEQRKFKSEPDYLPQLKREILSVICKYVNIDPHMVTIQLEQKNEDISVLELNIILPD</sequence>
<keyword id="KW-0131">Cell cycle</keyword>
<keyword id="KW-0132">Cell division</keyword>
<evidence type="ECO:0000255" key="1">
    <source>
        <dbReference type="HAMAP-Rule" id="MF_00262"/>
    </source>
</evidence>
<protein>
    <recommendedName>
        <fullName evidence="1">Cell division topological specificity factor</fullName>
    </recommendedName>
</protein>
<gene>
    <name evidence="1" type="primary">minE</name>
    <name type="ordered locus">BUsg_316</name>
</gene>
<name>MINE_BUCAP</name>
<proteinExistence type="inferred from homology"/>
<dbReference type="EMBL" id="AE013218">
    <property type="protein sequence ID" value="AAM67870.1"/>
    <property type="molecule type" value="Genomic_DNA"/>
</dbReference>
<dbReference type="RefSeq" id="WP_011053837.1">
    <property type="nucleotide sequence ID" value="NC_004061.1"/>
</dbReference>
<dbReference type="SMR" id="Q8K9L8"/>
<dbReference type="STRING" id="198804.BUsg_316"/>
<dbReference type="GeneID" id="93003785"/>
<dbReference type="KEGG" id="bas:BUsg_316"/>
<dbReference type="eggNOG" id="COG0851">
    <property type="taxonomic scope" value="Bacteria"/>
</dbReference>
<dbReference type="HOGENOM" id="CLU_137929_2_2_6"/>
<dbReference type="Proteomes" id="UP000000416">
    <property type="component" value="Chromosome"/>
</dbReference>
<dbReference type="GO" id="GO:0051301">
    <property type="term" value="P:cell division"/>
    <property type="evidence" value="ECO:0007669"/>
    <property type="project" value="UniProtKB-KW"/>
</dbReference>
<dbReference type="GO" id="GO:0032955">
    <property type="term" value="P:regulation of division septum assembly"/>
    <property type="evidence" value="ECO:0007669"/>
    <property type="project" value="InterPro"/>
</dbReference>
<dbReference type="FunFam" id="3.30.1070.10:FF:000001">
    <property type="entry name" value="Cell division topological specificity factor"/>
    <property type="match status" value="1"/>
</dbReference>
<dbReference type="Gene3D" id="3.30.1070.10">
    <property type="entry name" value="Cell division topological specificity factor MinE"/>
    <property type="match status" value="1"/>
</dbReference>
<dbReference type="HAMAP" id="MF_00262">
    <property type="entry name" value="MinE"/>
    <property type="match status" value="1"/>
</dbReference>
<dbReference type="InterPro" id="IPR005527">
    <property type="entry name" value="MinE"/>
</dbReference>
<dbReference type="InterPro" id="IPR036707">
    <property type="entry name" value="MinE_sf"/>
</dbReference>
<dbReference type="NCBIfam" id="TIGR01215">
    <property type="entry name" value="minE"/>
    <property type="match status" value="1"/>
</dbReference>
<dbReference type="NCBIfam" id="NF001422">
    <property type="entry name" value="PRK00296.1"/>
    <property type="match status" value="1"/>
</dbReference>
<dbReference type="Pfam" id="PF03776">
    <property type="entry name" value="MinE"/>
    <property type="match status" value="1"/>
</dbReference>
<dbReference type="SUPFAM" id="SSF55229">
    <property type="entry name" value="Cell division protein MinE topological specificity domain"/>
    <property type="match status" value="1"/>
</dbReference>
<accession>Q8K9L8</accession>
<feature type="chain" id="PRO_0000205871" description="Cell division topological specificity factor">
    <location>
        <begin position="1"/>
        <end position="83"/>
    </location>
</feature>
<organism>
    <name type="scientific">Buchnera aphidicola subsp. Schizaphis graminum (strain Sg)</name>
    <dbReference type="NCBI Taxonomy" id="198804"/>
    <lineage>
        <taxon>Bacteria</taxon>
        <taxon>Pseudomonadati</taxon>
        <taxon>Pseudomonadota</taxon>
        <taxon>Gammaproteobacteria</taxon>
        <taxon>Enterobacterales</taxon>
        <taxon>Erwiniaceae</taxon>
        <taxon>Buchnera</taxon>
    </lineage>
</organism>
<reference key="1">
    <citation type="journal article" date="2002" name="Science">
        <title>50 million years of genomic stasis in endosymbiotic bacteria.</title>
        <authorList>
            <person name="Tamas I."/>
            <person name="Klasson L."/>
            <person name="Canbaeck B."/>
            <person name="Naeslund A.K."/>
            <person name="Eriksson A.-S."/>
            <person name="Wernegreen J.J."/>
            <person name="Sandstroem J.P."/>
            <person name="Moran N.A."/>
            <person name="Andersson S.G.E."/>
        </authorList>
    </citation>
    <scope>NUCLEOTIDE SEQUENCE [LARGE SCALE GENOMIC DNA]</scope>
    <source>
        <strain>Sg</strain>
    </source>
</reference>